<evidence type="ECO:0000250" key="1"/>
<evidence type="ECO:0000305" key="2"/>
<dbReference type="EMBL" id="CR382135">
    <property type="protein sequence ID" value="CAG85819.2"/>
    <property type="molecule type" value="Genomic_DNA"/>
</dbReference>
<dbReference type="RefSeq" id="XP_457781.2">
    <property type="nucleotide sequence ID" value="XM_457781.1"/>
</dbReference>
<dbReference type="SMR" id="Q6BVI8"/>
<dbReference type="FunCoup" id="Q6BVI8">
    <property type="interactions" value="357"/>
</dbReference>
<dbReference type="STRING" id="284592.Q6BVI8"/>
<dbReference type="GeneID" id="2900722"/>
<dbReference type="KEGG" id="dha:DEHA2C02332g"/>
<dbReference type="VEuPathDB" id="FungiDB:DEHA2C02332g"/>
<dbReference type="eggNOG" id="KOG2976">
    <property type="taxonomic scope" value="Eukaryota"/>
</dbReference>
<dbReference type="HOGENOM" id="CLU_051894_2_0_1"/>
<dbReference type="InParanoid" id="Q6BVI8"/>
<dbReference type="OMA" id="SIQKAVW"/>
<dbReference type="OrthoDB" id="272162at2759"/>
<dbReference type="Proteomes" id="UP000000599">
    <property type="component" value="Chromosome C"/>
</dbReference>
<dbReference type="GO" id="GO:0034274">
    <property type="term" value="C:Atg12-Atg5-Atg16 complex"/>
    <property type="evidence" value="ECO:0007669"/>
    <property type="project" value="TreeGrafter"/>
</dbReference>
<dbReference type="GO" id="GO:0005776">
    <property type="term" value="C:autophagosome"/>
    <property type="evidence" value="ECO:0007669"/>
    <property type="project" value="TreeGrafter"/>
</dbReference>
<dbReference type="GO" id="GO:0044233">
    <property type="term" value="C:mitochondria-associated endoplasmic reticulum membrane contact site"/>
    <property type="evidence" value="ECO:0007669"/>
    <property type="project" value="TreeGrafter"/>
</dbReference>
<dbReference type="GO" id="GO:0061908">
    <property type="term" value="C:phagophore"/>
    <property type="evidence" value="ECO:0007669"/>
    <property type="project" value="TreeGrafter"/>
</dbReference>
<dbReference type="GO" id="GO:0034045">
    <property type="term" value="C:phagophore assembly site membrane"/>
    <property type="evidence" value="ECO:0007669"/>
    <property type="project" value="UniProtKB-SubCell"/>
</dbReference>
<dbReference type="GO" id="GO:0019776">
    <property type="term" value="F:Atg8-family ligase activity"/>
    <property type="evidence" value="ECO:0007669"/>
    <property type="project" value="TreeGrafter"/>
</dbReference>
<dbReference type="GO" id="GO:0000422">
    <property type="term" value="P:autophagy of mitochondrion"/>
    <property type="evidence" value="ECO:0007669"/>
    <property type="project" value="TreeGrafter"/>
</dbReference>
<dbReference type="GO" id="GO:0006995">
    <property type="term" value="P:cellular response to nitrogen starvation"/>
    <property type="evidence" value="ECO:0007669"/>
    <property type="project" value="TreeGrafter"/>
</dbReference>
<dbReference type="GO" id="GO:0034727">
    <property type="term" value="P:piecemeal microautophagy of the nucleus"/>
    <property type="evidence" value="ECO:0007669"/>
    <property type="project" value="TreeGrafter"/>
</dbReference>
<dbReference type="GO" id="GO:0015031">
    <property type="term" value="P:protein transport"/>
    <property type="evidence" value="ECO:0007669"/>
    <property type="project" value="UniProtKB-KW"/>
</dbReference>
<dbReference type="Gene3D" id="3.10.20.620">
    <property type="match status" value="1"/>
</dbReference>
<dbReference type="Gene3D" id="1.10.246.190">
    <property type="entry name" value="Autophagy protein Apg5, helix rich domain"/>
    <property type="match status" value="1"/>
</dbReference>
<dbReference type="Gene3D" id="3.10.20.90">
    <property type="entry name" value="Phosphatidylinositol 3-kinase Catalytic Subunit, Chain A, domain 1"/>
    <property type="match status" value="1"/>
</dbReference>
<dbReference type="InterPro" id="IPR007239">
    <property type="entry name" value="Atg5"/>
</dbReference>
<dbReference type="InterPro" id="IPR048940">
    <property type="entry name" value="ATG5_HBR"/>
</dbReference>
<dbReference type="InterPro" id="IPR042526">
    <property type="entry name" value="Atg5_HR"/>
</dbReference>
<dbReference type="InterPro" id="IPR048939">
    <property type="entry name" value="ATG5_UblA"/>
</dbReference>
<dbReference type="InterPro" id="IPR042527">
    <property type="entry name" value="Atg5_UblA_dom_sf"/>
</dbReference>
<dbReference type="InterPro" id="IPR048318">
    <property type="entry name" value="ATG5_UblB"/>
</dbReference>
<dbReference type="PANTHER" id="PTHR13040">
    <property type="entry name" value="AUTOPHAGY PROTEIN 5"/>
    <property type="match status" value="1"/>
</dbReference>
<dbReference type="PANTHER" id="PTHR13040:SF2">
    <property type="entry name" value="AUTOPHAGY PROTEIN 5"/>
    <property type="match status" value="1"/>
</dbReference>
<dbReference type="Pfam" id="PF20637">
    <property type="entry name" value="ATG5_HBR"/>
    <property type="match status" value="1"/>
</dbReference>
<dbReference type="Pfam" id="PF20638">
    <property type="entry name" value="ATG5_UblA"/>
    <property type="match status" value="1"/>
</dbReference>
<dbReference type="Pfam" id="PF04106">
    <property type="entry name" value="ATG5_UblB"/>
    <property type="match status" value="1"/>
</dbReference>
<comment type="function">
    <text evidence="1">Involved in cytoplasm to vacuole transport (Cvt) and autophagic vesicle formation. Autophagy is essential for maintenance of amino acid levels and protein synthesis under nitrogen starvation. Required for selective autophagic degradation of the nucleus (nucleophagy). Also required for mitophagy, which eliminates defective or superfluous mitochondria in order to fulfill cellular energy requirements and prevent excess ROS production. Conjugation with ATG12, through a ubiquitin-like conjugating system involving ATG7 as an E1-like activating enzyme and ATG10 as an E2-like conjugating enzyme, is essential for its function. The ATG12-ATG5 conjugate acts as an E3-like enzyme which is required for lipidation of ATG8 and ATG8 association to the vesicle membranes (By similarity).</text>
</comment>
<comment type="subunit">
    <text evidence="1">Conjugated with ATG12.</text>
</comment>
<comment type="subcellular location">
    <subcellularLocation>
        <location evidence="1">Preautophagosomal structure membrane</location>
        <topology evidence="1">Peripheral membrane protein</topology>
    </subcellularLocation>
</comment>
<comment type="PTM">
    <text evidence="1">Conjugated to ATG12; which is essential for autophagy.</text>
</comment>
<comment type="similarity">
    <text evidence="2">Belongs to the ATG5 family.</text>
</comment>
<gene>
    <name type="primary">ATG5</name>
    <name type="ordered locus">DEHA2C02332g</name>
</gene>
<keyword id="KW-0072">Autophagy</keyword>
<keyword id="KW-1017">Isopeptide bond</keyword>
<keyword id="KW-0472">Membrane</keyword>
<keyword id="KW-0653">Protein transport</keyword>
<keyword id="KW-1185">Reference proteome</keyword>
<keyword id="KW-0813">Transport</keyword>
<keyword id="KW-0832">Ubl conjugation</keyword>
<accession>Q6BVI8</accession>
<proteinExistence type="inferred from homology"/>
<feature type="chain" id="PRO_0000219003" description="Autophagy protein 5">
    <location>
        <begin position="1"/>
        <end position="292"/>
    </location>
</feature>
<feature type="cross-link" description="Glycyl lysine isopeptide (Lys-Gly) (interchain with G-Cter in ATG12)" evidence="1">
    <location>
        <position position="147"/>
    </location>
</feature>
<reference key="1">
    <citation type="journal article" date="2004" name="Nature">
        <title>Genome evolution in yeasts.</title>
        <authorList>
            <person name="Dujon B."/>
            <person name="Sherman D."/>
            <person name="Fischer G."/>
            <person name="Durrens P."/>
            <person name="Casaregola S."/>
            <person name="Lafontaine I."/>
            <person name="de Montigny J."/>
            <person name="Marck C."/>
            <person name="Neuveglise C."/>
            <person name="Talla E."/>
            <person name="Goffard N."/>
            <person name="Frangeul L."/>
            <person name="Aigle M."/>
            <person name="Anthouard V."/>
            <person name="Babour A."/>
            <person name="Barbe V."/>
            <person name="Barnay S."/>
            <person name="Blanchin S."/>
            <person name="Beckerich J.-M."/>
            <person name="Beyne E."/>
            <person name="Bleykasten C."/>
            <person name="Boisrame A."/>
            <person name="Boyer J."/>
            <person name="Cattolico L."/>
            <person name="Confanioleri F."/>
            <person name="de Daruvar A."/>
            <person name="Despons L."/>
            <person name="Fabre E."/>
            <person name="Fairhead C."/>
            <person name="Ferry-Dumazet H."/>
            <person name="Groppi A."/>
            <person name="Hantraye F."/>
            <person name="Hennequin C."/>
            <person name="Jauniaux N."/>
            <person name="Joyet P."/>
            <person name="Kachouri R."/>
            <person name="Kerrest A."/>
            <person name="Koszul R."/>
            <person name="Lemaire M."/>
            <person name="Lesur I."/>
            <person name="Ma L."/>
            <person name="Muller H."/>
            <person name="Nicaud J.-M."/>
            <person name="Nikolski M."/>
            <person name="Oztas S."/>
            <person name="Ozier-Kalogeropoulos O."/>
            <person name="Pellenz S."/>
            <person name="Potier S."/>
            <person name="Richard G.-F."/>
            <person name="Straub M.-L."/>
            <person name="Suleau A."/>
            <person name="Swennen D."/>
            <person name="Tekaia F."/>
            <person name="Wesolowski-Louvel M."/>
            <person name="Westhof E."/>
            <person name="Wirth B."/>
            <person name="Zeniou-Meyer M."/>
            <person name="Zivanovic Y."/>
            <person name="Bolotin-Fukuhara M."/>
            <person name="Thierry A."/>
            <person name="Bouchier C."/>
            <person name="Caudron B."/>
            <person name="Scarpelli C."/>
            <person name="Gaillardin C."/>
            <person name="Weissenbach J."/>
            <person name="Wincker P."/>
            <person name="Souciet J.-L."/>
        </authorList>
    </citation>
    <scope>NUCLEOTIDE SEQUENCE [LARGE SCALE GENOMIC DNA]</scope>
    <source>
        <strain>ATCC 36239 / CBS 767 / BCRC 21394 / JCM 1990 / NBRC 0083 / IGC 2968</strain>
    </source>
</reference>
<protein>
    <recommendedName>
        <fullName>Autophagy protein 5</fullName>
    </recommendedName>
</protein>
<organism>
    <name type="scientific">Debaryomyces hansenii (strain ATCC 36239 / CBS 767 / BCRC 21394 / JCM 1990 / NBRC 0083 / IGC 2968)</name>
    <name type="common">Yeast</name>
    <name type="synonym">Torulaspora hansenii</name>
    <dbReference type="NCBI Taxonomy" id="284592"/>
    <lineage>
        <taxon>Eukaryota</taxon>
        <taxon>Fungi</taxon>
        <taxon>Dikarya</taxon>
        <taxon>Ascomycota</taxon>
        <taxon>Saccharomycotina</taxon>
        <taxon>Pichiomycetes</taxon>
        <taxon>Debaryomycetaceae</taxon>
        <taxon>Debaryomyces</taxon>
    </lineage>
</organism>
<sequence length="292" mass="34128">MQSSNELIEIKDKLWNGSINVRILMGDDNIKDPKEFLITVYRNSYFPIYFPSVITYFQKYNEKIKYMPVWLEYETVPIKWNLPIGVLYDLLHLSSIVQNREDSSWTLTLRFSDDYPTDQVIPFTYTDVDNSVNYNKSLKEVVVNQLKQSCFVINGNSKPIMNLSEKDSDELWNSIRIHNLKSFNQINKKIIPIQKKFQKLPVKIYIPGSATIIHAPIYPYSDSGEAVLLRDILEEYLPDLMSSNNETLGSIYIHGINVETIINKDIIDVWELFKHLDNFLYIIVLFSTYSTI</sequence>
<name>ATG5_DEBHA</name>